<organism>
    <name type="scientific">Paenarthrobacter aurescens (strain TC1)</name>
    <dbReference type="NCBI Taxonomy" id="290340"/>
    <lineage>
        <taxon>Bacteria</taxon>
        <taxon>Bacillati</taxon>
        <taxon>Actinomycetota</taxon>
        <taxon>Actinomycetes</taxon>
        <taxon>Micrococcales</taxon>
        <taxon>Micrococcaceae</taxon>
        <taxon>Paenarthrobacter</taxon>
    </lineage>
</organism>
<sequence length="143" mass="16115">MFLGTHSPRLDEKGRIILPAKFREELADGLVLTRGQERCIYVFSQKEFERIHESMREAPLSSKQARDYIRVFLSGASDEVPDKQGRVTIPPALRAYAGLGRELAVIGAGTRAEIWDADAWNEYLNEKEAAFSETDDDNLPGFI</sequence>
<protein>
    <recommendedName>
        <fullName>Transcriptional regulator MraZ</fullName>
    </recommendedName>
</protein>
<comment type="subunit">
    <text evidence="1">Forms oligomers.</text>
</comment>
<comment type="subcellular location">
    <subcellularLocation>
        <location evidence="1">Cytoplasm</location>
        <location evidence="1">Nucleoid</location>
    </subcellularLocation>
</comment>
<comment type="similarity">
    <text evidence="1">Belongs to the MraZ family.</text>
</comment>
<gene>
    <name evidence="1" type="primary">mraZ</name>
    <name type="ordered locus">AAur_1701</name>
</gene>
<reference key="1">
    <citation type="journal article" date="2006" name="PLoS Genet.">
        <title>Secrets of soil survival revealed by the genome sequence of Arthrobacter aurescens TC1.</title>
        <authorList>
            <person name="Mongodin E.F."/>
            <person name="Shapir N."/>
            <person name="Daugherty S.C."/>
            <person name="DeBoy R.T."/>
            <person name="Emerson J.B."/>
            <person name="Shvartzbeyn A."/>
            <person name="Radune D."/>
            <person name="Vamathevan J."/>
            <person name="Riggs F."/>
            <person name="Grinberg V."/>
            <person name="Khouri H.M."/>
            <person name="Wackett L.P."/>
            <person name="Nelson K.E."/>
            <person name="Sadowsky M.J."/>
        </authorList>
    </citation>
    <scope>NUCLEOTIDE SEQUENCE [LARGE SCALE GENOMIC DNA]</scope>
    <source>
        <strain>TC1</strain>
    </source>
</reference>
<keyword id="KW-0963">Cytoplasm</keyword>
<keyword id="KW-0238">DNA-binding</keyword>
<keyword id="KW-0677">Repeat</keyword>
<keyword id="KW-0804">Transcription</keyword>
<keyword id="KW-0805">Transcription regulation</keyword>
<evidence type="ECO:0000255" key="1">
    <source>
        <dbReference type="HAMAP-Rule" id="MF_01008"/>
    </source>
</evidence>
<evidence type="ECO:0000255" key="2">
    <source>
        <dbReference type="PROSITE-ProRule" id="PRU01076"/>
    </source>
</evidence>
<dbReference type="EMBL" id="CP000474">
    <property type="protein sequence ID" value="ABM07418.1"/>
    <property type="molecule type" value="Genomic_DNA"/>
</dbReference>
<dbReference type="RefSeq" id="WP_011774407.1">
    <property type="nucleotide sequence ID" value="NC_008711.1"/>
</dbReference>
<dbReference type="SMR" id="A1R5E9"/>
<dbReference type="STRING" id="290340.AAur_1701"/>
<dbReference type="KEGG" id="aau:AAur_1701"/>
<dbReference type="eggNOG" id="COG2001">
    <property type="taxonomic scope" value="Bacteria"/>
</dbReference>
<dbReference type="HOGENOM" id="CLU_107907_0_5_11"/>
<dbReference type="OrthoDB" id="9807753at2"/>
<dbReference type="Proteomes" id="UP000000637">
    <property type="component" value="Chromosome"/>
</dbReference>
<dbReference type="GO" id="GO:0005737">
    <property type="term" value="C:cytoplasm"/>
    <property type="evidence" value="ECO:0007669"/>
    <property type="project" value="UniProtKB-UniRule"/>
</dbReference>
<dbReference type="GO" id="GO:0009295">
    <property type="term" value="C:nucleoid"/>
    <property type="evidence" value="ECO:0007669"/>
    <property type="project" value="UniProtKB-SubCell"/>
</dbReference>
<dbReference type="GO" id="GO:0003700">
    <property type="term" value="F:DNA-binding transcription factor activity"/>
    <property type="evidence" value="ECO:0007669"/>
    <property type="project" value="UniProtKB-UniRule"/>
</dbReference>
<dbReference type="GO" id="GO:0000976">
    <property type="term" value="F:transcription cis-regulatory region binding"/>
    <property type="evidence" value="ECO:0007669"/>
    <property type="project" value="TreeGrafter"/>
</dbReference>
<dbReference type="GO" id="GO:2000143">
    <property type="term" value="P:negative regulation of DNA-templated transcription initiation"/>
    <property type="evidence" value="ECO:0007669"/>
    <property type="project" value="TreeGrafter"/>
</dbReference>
<dbReference type="CDD" id="cd16321">
    <property type="entry name" value="MraZ_C"/>
    <property type="match status" value="1"/>
</dbReference>
<dbReference type="CDD" id="cd16320">
    <property type="entry name" value="MraZ_N"/>
    <property type="match status" value="1"/>
</dbReference>
<dbReference type="Gene3D" id="3.40.1550.20">
    <property type="entry name" value="Transcriptional regulator MraZ domain"/>
    <property type="match status" value="1"/>
</dbReference>
<dbReference type="HAMAP" id="MF_01008">
    <property type="entry name" value="MraZ"/>
    <property type="match status" value="1"/>
</dbReference>
<dbReference type="InterPro" id="IPR003444">
    <property type="entry name" value="MraZ"/>
</dbReference>
<dbReference type="InterPro" id="IPR035644">
    <property type="entry name" value="MraZ_C"/>
</dbReference>
<dbReference type="InterPro" id="IPR020603">
    <property type="entry name" value="MraZ_dom"/>
</dbReference>
<dbReference type="InterPro" id="IPR035642">
    <property type="entry name" value="MraZ_N"/>
</dbReference>
<dbReference type="InterPro" id="IPR038619">
    <property type="entry name" value="MraZ_sf"/>
</dbReference>
<dbReference type="InterPro" id="IPR007159">
    <property type="entry name" value="SpoVT-AbrB_dom"/>
</dbReference>
<dbReference type="InterPro" id="IPR037914">
    <property type="entry name" value="SpoVT-AbrB_sf"/>
</dbReference>
<dbReference type="NCBIfam" id="TIGR00242">
    <property type="entry name" value="division/cell wall cluster transcriptional repressor MraZ"/>
    <property type="match status" value="1"/>
</dbReference>
<dbReference type="PANTHER" id="PTHR34701">
    <property type="entry name" value="TRANSCRIPTIONAL REGULATOR MRAZ"/>
    <property type="match status" value="1"/>
</dbReference>
<dbReference type="PANTHER" id="PTHR34701:SF1">
    <property type="entry name" value="TRANSCRIPTIONAL REGULATOR MRAZ"/>
    <property type="match status" value="1"/>
</dbReference>
<dbReference type="Pfam" id="PF02381">
    <property type="entry name" value="MraZ"/>
    <property type="match status" value="2"/>
</dbReference>
<dbReference type="SUPFAM" id="SSF89447">
    <property type="entry name" value="AbrB/MazE/MraZ-like"/>
    <property type="match status" value="1"/>
</dbReference>
<dbReference type="PROSITE" id="PS51740">
    <property type="entry name" value="SPOVT_ABRB"/>
    <property type="match status" value="2"/>
</dbReference>
<name>MRAZ_PAEAT</name>
<accession>A1R5E9</accession>
<feature type="chain" id="PRO_1000062846" description="Transcriptional regulator MraZ">
    <location>
        <begin position="1"/>
        <end position="143"/>
    </location>
</feature>
<feature type="domain" description="SpoVT-AbrB 1" evidence="2">
    <location>
        <begin position="5"/>
        <end position="47"/>
    </location>
</feature>
<feature type="domain" description="SpoVT-AbrB 2" evidence="2">
    <location>
        <begin position="76"/>
        <end position="119"/>
    </location>
</feature>
<proteinExistence type="inferred from homology"/>